<keyword id="KW-0002">3D-structure</keyword>
<keyword id="KW-0274">FAD</keyword>
<keyword id="KW-0285">Flavoprotein</keyword>
<keyword id="KW-0520">NAD</keyword>
<keyword id="KW-0560">Oxidoreductase</keyword>
<keyword id="KW-1185">Reference proteome</keyword>
<keyword id="KW-0698">rRNA processing</keyword>
<feature type="chain" id="PRO_0000169566" description="Ribosomal RNA dihydrouridine synthase">
    <location>
        <begin position="1"/>
        <end position="401"/>
    </location>
</feature>
<feature type="binding site" evidence="4">
    <location>
        <position position="15"/>
    </location>
    <ligand>
        <name>FAD</name>
        <dbReference type="ChEBI" id="CHEBI:57692"/>
    </ligand>
</feature>
<feature type="binding site" evidence="4">
    <location>
        <position position="34"/>
    </location>
    <ligand>
        <name>FAD</name>
        <dbReference type="ChEBI" id="CHEBI:57692"/>
    </ligand>
</feature>
<feature type="binding site" evidence="4">
    <location>
        <position position="35"/>
    </location>
    <ligand>
        <name>FAD</name>
        <dbReference type="ChEBI" id="CHEBI:57692"/>
    </ligand>
</feature>
<feature type="binding site" evidence="4">
    <location>
        <position position="41"/>
    </location>
    <ligand>
        <name>FAD</name>
        <dbReference type="ChEBI" id="CHEBI:57692"/>
    </ligand>
</feature>
<feature type="binding site" evidence="4">
    <location>
        <position position="47"/>
    </location>
    <ligand>
        <name>FAD</name>
        <dbReference type="ChEBI" id="CHEBI:57692"/>
    </ligand>
</feature>
<feature type="binding site" evidence="4">
    <location>
        <position position="52"/>
    </location>
    <ligand>
        <name>FAD</name>
        <dbReference type="ChEBI" id="CHEBI:57692"/>
    </ligand>
</feature>
<feature type="binding site" evidence="4">
    <location>
        <position position="132"/>
    </location>
    <ligand>
        <name>FAD</name>
        <dbReference type="ChEBI" id="CHEBI:57692"/>
    </ligand>
</feature>
<feature type="binding site" evidence="4">
    <location>
        <position position="371"/>
    </location>
    <ligand>
        <name>FAD</name>
        <dbReference type="ChEBI" id="CHEBI:57692"/>
    </ligand>
</feature>
<feature type="binding site" evidence="4">
    <location>
        <position position="384"/>
    </location>
    <ligand>
        <name>FAD</name>
        <dbReference type="ChEBI" id="CHEBI:57692"/>
    </ligand>
</feature>
<feature type="strand" evidence="5">
    <location>
        <begin position="2"/>
        <end position="4"/>
    </location>
</feature>
<feature type="strand" evidence="5">
    <location>
        <begin position="6"/>
        <end position="10"/>
    </location>
</feature>
<feature type="helix" evidence="5">
    <location>
        <begin position="14"/>
        <end position="25"/>
    </location>
</feature>
<feature type="strand" evidence="5">
    <location>
        <begin position="30"/>
        <end position="33"/>
    </location>
</feature>
<feature type="strand" evidence="5">
    <location>
        <begin position="35"/>
        <end position="39"/>
    </location>
</feature>
<feature type="helix" evidence="5">
    <location>
        <begin position="41"/>
        <end position="45"/>
    </location>
</feature>
<feature type="helix" evidence="5">
    <location>
        <begin position="46"/>
        <end position="49"/>
    </location>
</feature>
<feature type="strand" evidence="5">
    <location>
        <begin position="54"/>
        <end position="57"/>
    </location>
</feature>
<feature type="helix" evidence="5">
    <location>
        <begin position="60"/>
        <end position="62"/>
    </location>
</feature>
<feature type="helix" evidence="5">
    <location>
        <begin position="72"/>
        <end position="77"/>
    </location>
</feature>
<feature type="helix" evidence="5">
    <location>
        <begin position="80"/>
        <end position="89"/>
    </location>
</feature>
<feature type="strand" evidence="5">
    <location>
        <begin position="94"/>
        <end position="96"/>
    </location>
</feature>
<feature type="strand" evidence="5">
    <location>
        <begin position="101"/>
        <end position="104"/>
    </location>
</feature>
<feature type="helix" evidence="5">
    <location>
        <begin position="109"/>
        <end position="122"/>
    </location>
</feature>
<feature type="strand" evidence="5">
    <location>
        <begin position="125"/>
        <end position="127"/>
    </location>
</feature>
<feature type="strand" evidence="5">
    <location>
        <begin position="132"/>
        <end position="137"/>
    </location>
</feature>
<feature type="strand" evidence="5">
    <location>
        <begin position="146"/>
        <end position="150"/>
    </location>
</feature>
<feature type="strand" evidence="5">
    <location>
        <begin position="153"/>
        <end position="162"/>
    </location>
</feature>
<feature type="helix" evidence="5">
    <location>
        <begin position="170"/>
        <end position="172"/>
    </location>
</feature>
<feature type="helix" evidence="5">
    <location>
        <begin position="177"/>
        <end position="184"/>
    </location>
</feature>
<feature type="strand" evidence="5">
    <location>
        <begin position="189"/>
        <end position="196"/>
    </location>
</feature>
<feature type="helix" evidence="5">
    <location>
        <begin position="203"/>
        <end position="211"/>
    </location>
</feature>
<feature type="strand" evidence="5">
    <location>
        <begin position="215"/>
        <end position="222"/>
    </location>
</feature>
<feature type="strand" evidence="5">
    <location>
        <begin position="227"/>
        <end position="234"/>
    </location>
</feature>
<feature type="strand" evidence="5">
    <location>
        <begin position="236"/>
        <end position="241"/>
    </location>
</feature>
<feature type="helix" evidence="5">
    <location>
        <begin position="242"/>
        <end position="247"/>
    </location>
</feature>
<feature type="turn" evidence="5">
    <location>
        <begin position="248"/>
        <end position="250"/>
    </location>
</feature>
<feature type="strand" evidence="5">
    <location>
        <begin position="257"/>
        <end position="261"/>
    </location>
</feature>
<feature type="strand" evidence="5">
    <location>
        <begin position="263"/>
        <end position="265"/>
    </location>
</feature>
<feature type="helix" evidence="5">
    <location>
        <begin position="267"/>
        <end position="277"/>
    </location>
</feature>
<feature type="helix" evidence="5">
    <location>
        <begin position="283"/>
        <end position="287"/>
    </location>
</feature>
<feature type="turn" evidence="5">
    <location>
        <begin position="288"/>
        <end position="290"/>
    </location>
</feature>
<feature type="helix" evidence="5">
    <location>
        <begin position="293"/>
        <end position="301"/>
    </location>
</feature>
<feature type="helix" evidence="5">
    <location>
        <begin position="310"/>
        <end position="312"/>
    </location>
</feature>
<feature type="helix" evidence="5">
    <location>
        <begin position="315"/>
        <end position="326"/>
    </location>
</feature>
<feature type="strand" evidence="5">
    <location>
        <begin position="328"/>
        <end position="330"/>
    </location>
</feature>
<feature type="strand" evidence="5">
    <location>
        <begin position="333"/>
        <end position="335"/>
    </location>
</feature>
<feature type="turn" evidence="5">
    <location>
        <begin position="338"/>
        <end position="340"/>
    </location>
</feature>
<feature type="strand" evidence="5">
    <location>
        <begin position="342"/>
        <end position="348"/>
    </location>
</feature>
<feature type="helix" evidence="5">
    <location>
        <begin position="350"/>
        <end position="352"/>
    </location>
</feature>
<feature type="turn" evidence="5">
    <location>
        <begin position="355"/>
        <end position="357"/>
    </location>
</feature>
<feature type="strand" evidence="5">
    <location>
        <begin position="359"/>
        <end position="363"/>
    </location>
</feature>
<feature type="strand" evidence="5">
    <location>
        <begin position="366"/>
        <end position="368"/>
    </location>
</feature>
<feature type="helix" evidence="5">
    <location>
        <begin position="370"/>
        <end position="372"/>
    </location>
</feature>
<feature type="turn" evidence="5">
    <location>
        <begin position="379"/>
        <end position="381"/>
    </location>
</feature>
<feature type="helix" evidence="5">
    <location>
        <begin position="382"/>
        <end position="399"/>
    </location>
</feature>
<organism>
    <name type="scientific">Haemophilus influenzae (strain ATCC 51907 / DSM 11121 / KW20 / Rd)</name>
    <dbReference type="NCBI Taxonomy" id="71421"/>
    <lineage>
        <taxon>Bacteria</taxon>
        <taxon>Pseudomonadati</taxon>
        <taxon>Pseudomonadota</taxon>
        <taxon>Gammaproteobacteria</taxon>
        <taxon>Pasteurellales</taxon>
        <taxon>Pasteurellaceae</taxon>
        <taxon>Haemophilus</taxon>
    </lineage>
</organism>
<sequence length="401" mass="44476">MSQYSENIIIGAGAAGLFCAAQLAKLGKSVTVFDNGKKIGRKILMSGGGFCNFTNLEVTPAHYLSQNPHFVKSALARYTNWDFISLVAEQGITYHEKELGQLFCDEGAEQIVEMLKSECDKYGAKILLRSEVSQVERIQNDEKVRFVLQVNSTQWQCKNLIVATGGLSMPGLGATPFGYQIAEQFGIPVIPPRASLVPFTYRETDKFLTALSGISLPVTITALCGKSFYNQLLFTHRGISGPAVLQISNYWQPTESVEIDLLPNHNVEEEINQAKQSSPKQMLKTILVRLLPKKLVELWIEQGIVQDEVIANISKVRVKNLVDFIHHWEFTPNGTEGYRTAEVTMGGVDTKVISSKTMESNQVSGLYFIGEVLDVTGWLGGYNFQWAWSSAYACALSISRQ</sequence>
<accession>P44941</accession>
<comment type="function">
    <text evidence="1">Catalyzes the synthesis of 5,6-dihydrouridine (D) at position 2449 in 23S rRNA.</text>
</comment>
<comment type="catalytic activity">
    <reaction evidence="1">
        <text>a 5,6-dihydrouridine in mRNA + NAD(+) = a uridine in mRNA + NADH + H(+)</text>
        <dbReference type="Rhea" id="RHEA:69851"/>
        <dbReference type="Rhea" id="RHEA-COMP:14658"/>
        <dbReference type="Rhea" id="RHEA-COMP:17789"/>
        <dbReference type="ChEBI" id="CHEBI:15378"/>
        <dbReference type="ChEBI" id="CHEBI:57540"/>
        <dbReference type="ChEBI" id="CHEBI:57945"/>
        <dbReference type="ChEBI" id="CHEBI:65315"/>
        <dbReference type="ChEBI" id="CHEBI:74443"/>
    </reaction>
    <physiologicalReaction direction="right-to-left" evidence="1">
        <dbReference type="Rhea" id="RHEA:69853"/>
    </physiologicalReaction>
</comment>
<comment type="cofactor">
    <cofactor evidence="2">
        <name>FAD</name>
        <dbReference type="ChEBI" id="CHEBI:57692"/>
    </cofactor>
</comment>
<comment type="similarity">
    <text evidence="3">Belongs to the BaiN/RdsA family. RdsA subfamily.</text>
</comment>
<name>RDSA_HAEIN</name>
<protein>
    <recommendedName>
        <fullName evidence="1">Ribosomal RNA dihydrouridine synthase</fullName>
        <shortName evidence="1">rRNA dihydrouridine synthase</shortName>
        <ecNumber evidence="1">1.3.1.-</ecNumber>
    </recommendedName>
    <alternativeName>
        <fullName evidence="1">Ribosomal dihydrouridine synthase A</fullName>
    </alternativeName>
</protein>
<reference key="1">
    <citation type="journal article" date="1995" name="Science">
        <title>Whole-genome random sequencing and assembly of Haemophilus influenzae Rd.</title>
        <authorList>
            <person name="Fleischmann R.D."/>
            <person name="Adams M.D."/>
            <person name="White O."/>
            <person name="Clayton R.A."/>
            <person name="Kirkness E.F."/>
            <person name="Kerlavage A.R."/>
            <person name="Bult C.J."/>
            <person name="Tomb J.-F."/>
            <person name="Dougherty B.A."/>
            <person name="Merrick J.M."/>
            <person name="McKenney K."/>
            <person name="Sutton G.G."/>
            <person name="FitzHugh W."/>
            <person name="Fields C.A."/>
            <person name="Gocayne J.D."/>
            <person name="Scott J.D."/>
            <person name="Shirley R."/>
            <person name="Liu L.-I."/>
            <person name="Glodek A."/>
            <person name="Kelley J.M."/>
            <person name="Weidman J.F."/>
            <person name="Phillips C.A."/>
            <person name="Spriggs T."/>
            <person name="Hedblom E."/>
            <person name="Cotton M.D."/>
            <person name="Utterback T.R."/>
            <person name="Hanna M.C."/>
            <person name="Nguyen D.T."/>
            <person name="Saudek D.M."/>
            <person name="Brandon R.C."/>
            <person name="Fine L.D."/>
            <person name="Fritchman J.L."/>
            <person name="Fuhrmann J.L."/>
            <person name="Geoghagen N.S.M."/>
            <person name="Gnehm C.L."/>
            <person name="McDonald L.A."/>
            <person name="Small K.V."/>
            <person name="Fraser C.M."/>
            <person name="Smith H.O."/>
            <person name="Venter J.C."/>
        </authorList>
    </citation>
    <scope>NUCLEOTIDE SEQUENCE [LARGE SCALE GENOMIC DNA]</scope>
    <source>
        <strain>ATCC 51907 / DSM 11121 / KW20 / Rd</strain>
    </source>
</reference>
<reference evidence="4" key="2">
    <citation type="submission" date="2006-04" db="PDB data bank">
        <title>Crystal structure of hypothetical flavoprotein HI0933 from Haemophilus influenzae Rd.</title>
        <authorList>
            <person name="Mulichak A.M."/>
            <person name="Patskovsky Y."/>
            <person name="Keefe L.J."/>
            <person name="Almo S.C."/>
        </authorList>
    </citation>
    <scope>X-RAY CRYSTALLOGRAPHY (2.70 ANGSTROMS) IN COMPLEX WITH FAD</scope>
    <source>
        <strain>ATCC 51907 / DSM 11121 / KW20 / Rd</strain>
    </source>
</reference>
<proteinExistence type="evidence at protein level"/>
<evidence type="ECO:0000250" key="1">
    <source>
        <dbReference type="UniProtKB" id="P37631"/>
    </source>
</evidence>
<evidence type="ECO:0000269" key="2">
    <source ref="2"/>
</evidence>
<evidence type="ECO:0000305" key="3"/>
<evidence type="ECO:0007744" key="4">
    <source>
        <dbReference type="PDB" id="2GQF"/>
    </source>
</evidence>
<evidence type="ECO:0007829" key="5">
    <source>
        <dbReference type="PDB" id="2GQF"/>
    </source>
</evidence>
<gene>
    <name evidence="1" type="primary">rdsA</name>
    <name type="ordered locus">HI_0933</name>
</gene>
<dbReference type="EC" id="1.3.1.-" evidence="1"/>
<dbReference type="EMBL" id="L42023">
    <property type="protein sequence ID" value="AAC22591.1"/>
    <property type="molecule type" value="Genomic_DNA"/>
</dbReference>
<dbReference type="PIR" id="G64161">
    <property type="entry name" value="G64161"/>
</dbReference>
<dbReference type="RefSeq" id="NP_439093.1">
    <property type="nucleotide sequence ID" value="NC_000907.1"/>
</dbReference>
<dbReference type="PDB" id="2GQF">
    <property type="method" value="X-ray"/>
    <property type="resolution" value="2.70 A"/>
    <property type="chains" value="A=1-401"/>
</dbReference>
<dbReference type="PDBsum" id="2GQF"/>
<dbReference type="SMR" id="P44941"/>
<dbReference type="STRING" id="71421.HI_0933"/>
<dbReference type="EnsemblBacteria" id="AAC22591">
    <property type="protein sequence ID" value="AAC22591"/>
    <property type="gene ID" value="HI_0933"/>
</dbReference>
<dbReference type="KEGG" id="hin:HI_0933"/>
<dbReference type="PATRIC" id="fig|71421.8.peg.974"/>
<dbReference type="eggNOG" id="COG2081">
    <property type="taxonomic scope" value="Bacteria"/>
</dbReference>
<dbReference type="HOGENOM" id="CLU_025174_2_0_6"/>
<dbReference type="OrthoDB" id="9773233at2"/>
<dbReference type="PhylomeDB" id="P44941"/>
<dbReference type="BioCyc" id="HINF71421:G1GJ1-973-MONOMER"/>
<dbReference type="EvolutionaryTrace" id="P44941"/>
<dbReference type="Proteomes" id="UP000000579">
    <property type="component" value="Chromosome"/>
</dbReference>
<dbReference type="Gene3D" id="3.50.50.60">
    <property type="entry name" value="FAD/NAD(P)-binding domain"/>
    <property type="match status" value="1"/>
</dbReference>
<dbReference type="Gene3D" id="1.10.8.260">
    <property type="entry name" value="HI0933 insert domain-like"/>
    <property type="match status" value="1"/>
</dbReference>
<dbReference type="Gene3D" id="2.40.30.10">
    <property type="entry name" value="Translation factors"/>
    <property type="match status" value="1"/>
</dbReference>
<dbReference type="InterPro" id="IPR004792">
    <property type="entry name" value="BaiN-like"/>
</dbReference>
<dbReference type="InterPro" id="IPR055178">
    <property type="entry name" value="BaiN-like_dom"/>
</dbReference>
<dbReference type="InterPro" id="IPR023166">
    <property type="entry name" value="BaiN-like_dom_sf"/>
</dbReference>
<dbReference type="InterPro" id="IPR036188">
    <property type="entry name" value="FAD/NAD-bd_sf"/>
</dbReference>
<dbReference type="NCBIfam" id="TIGR00275">
    <property type="entry name" value="aminoacetone oxidase family FAD-binding enzyme"/>
    <property type="match status" value="1"/>
</dbReference>
<dbReference type="PANTHER" id="PTHR42887">
    <property type="entry name" value="OS12G0638800 PROTEIN"/>
    <property type="match status" value="1"/>
</dbReference>
<dbReference type="PANTHER" id="PTHR42887:SF2">
    <property type="entry name" value="OS12G0638800 PROTEIN"/>
    <property type="match status" value="1"/>
</dbReference>
<dbReference type="Pfam" id="PF03486">
    <property type="entry name" value="HI0933_like"/>
    <property type="match status" value="1"/>
</dbReference>
<dbReference type="Pfam" id="PF22780">
    <property type="entry name" value="HI0933_like_1st"/>
    <property type="match status" value="1"/>
</dbReference>
<dbReference type="PRINTS" id="PR00411">
    <property type="entry name" value="PNDRDTASEI"/>
</dbReference>
<dbReference type="SUPFAM" id="SSF51905">
    <property type="entry name" value="FAD/NAD(P)-binding domain"/>
    <property type="match status" value="1"/>
</dbReference>
<dbReference type="SUPFAM" id="SSF160996">
    <property type="entry name" value="HI0933 insert domain-like"/>
    <property type="match status" value="1"/>
</dbReference>